<feature type="chain" id="PRO_0000271805" description="Protein nucleotidyltransferase YdiU">
    <location>
        <begin position="1"/>
        <end position="523"/>
    </location>
</feature>
<feature type="active site" description="Proton acceptor" evidence="1">
    <location>
        <position position="275"/>
    </location>
</feature>
<feature type="binding site" evidence="1">
    <location>
        <position position="101"/>
    </location>
    <ligand>
        <name>ATP</name>
        <dbReference type="ChEBI" id="CHEBI:30616"/>
    </ligand>
</feature>
<feature type="binding site" evidence="1">
    <location>
        <position position="103"/>
    </location>
    <ligand>
        <name>ATP</name>
        <dbReference type="ChEBI" id="CHEBI:30616"/>
    </ligand>
</feature>
<feature type="binding site" evidence="1">
    <location>
        <position position="104"/>
    </location>
    <ligand>
        <name>ATP</name>
        <dbReference type="ChEBI" id="CHEBI:30616"/>
    </ligand>
</feature>
<feature type="binding site" evidence="1">
    <location>
        <position position="128"/>
    </location>
    <ligand>
        <name>ATP</name>
        <dbReference type="ChEBI" id="CHEBI:30616"/>
    </ligand>
</feature>
<feature type="binding site" evidence="1">
    <location>
        <position position="140"/>
    </location>
    <ligand>
        <name>ATP</name>
        <dbReference type="ChEBI" id="CHEBI:30616"/>
    </ligand>
</feature>
<feature type="binding site" evidence="1">
    <location>
        <position position="141"/>
    </location>
    <ligand>
        <name>ATP</name>
        <dbReference type="ChEBI" id="CHEBI:30616"/>
    </ligand>
</feature>
<feature type="binding site" evidence="1">
    <location>
        <position position="198"/>
    </location>
    <ligand>
        <name>ATP</name>
        <dbReference type="ChEBI" id="CHEBI:30616"/>
    </ligand>
</feature>
<feature type="binding site" evidence="1">
    <location>
        <position position="205"/>
    </location>
    <ligand>
        <name>ATP</name>
        <dbReference type="ChEBI" id="CHEBI:30616"/>
    </ligand>
</feature>
<feature type="binding site" evidence="1">
    <location>
        <position position="276"/>
    </location>
    <ligand>
        <name>Mg(2+)</name>
        <dbReference type="ChEBI" id="CHEBI:18420"/>
    </ligand>
</feature>
<feature type="binding site" evidence="1">
    <location>
        <position position="285"/>
    </location>
    <ligand>
        <name>ATP</name>
        <dbReference type="ChEBI" id="CHEBI:30616"/>
    </ligand>
</feature>
<feature type="binding site" evidence="1">
    <location>
        <position position="285"/>
    </location>
    <ligand>
        <name>Mg(2+)</name>
        <dbReference type="ChEBI" id="CHEBI:18420"/>
    </ligand>
</feature>
<protein>
    <recommendedName>
        <fullName evidence="1">Protein nucleotidyltransferase YdiU</fullName>
        <ecNumber evidence="1">2.7.7.-</ecNumber>
    </recommendedName>
    <alternativeName>
        <fullName evidence="1">Protein adenylyltransferase YdiU</fullName>
        <ecNumber evidence="1">2.7.7.108</ecNumber>
    </alternativeName>
    <alternativeName>
        <fullName evidence="1">Protein uridylyltransferase YdiU</fullName>
        <ecNumber evidence="1">2.7.7.-</ecNumber>
    </alternativeName>
</protein>
<reference key="1">
    <citation type="journal article" date="2005" name="Arch. Microbiol.">
        <title>The genome sequence of an anaerobic aromatic-degrading denitrifying bacterium, strain EbN1.</title>
        <authorList>
            <person name="Rabus R."/>
            <person name="Kube M."/>
            <person name="Heider J."/>
            <person name="Beck A."/>
            <person name="Heitmann K."/>
            <person name="Widdel F."/>
            <person name="Reinhardt R."/>
        </authorList>
    </citation>
    <scope>NUCLEOTIDE SEQUENCE [LARGE SCALE GENOMIC DNA]</scope>
    <source>
        <strain>DSM 19018 / LMG 30748 / EbN1</strain>
    </source>
</reference>
<dbReference type="EC" id="2.7.7.-" evidence="1"/>
<dbReference type="EC" id="2.7.7.108" evidence="1"/>
<dbReference type="EMBL" id="CR555306">
    <property type="protein sequence ID" value="CAI09925.1"/>
    <property type="molecule type" value="Genomic_DNA"/>
</dbReference>
<dbReference type="RefSeq" id="WP_011239576.1">
    <property type="nucleotide sequence ID" value="NC_006513.1"/>
</dbReference>
<dbReference type="SMR" id="Q5NYD9"/>
<dbReference type="STRING" id="76114.ebA6654"/>
<dbReference type="KEGG" id="eba:ebA6654"/>
<dbReference type="eggNOG" id="COG0397">
    <property type="taxonomic scope" value="Bacteria"/>
</dbReference>
<dbReference type="HOGENOM" id="CLU_010245_4_0_4"/>
<dbReference type="OrthoDB" id="9776281at2"/>
<dbReference type="Proteomes" id="UP000006552">
    <property type="component" value="Chromosome"/>
</dbReference>
<dbReference type="GO" id="GO:0070733">
    <property type="term" value="F:AMPylase activity"/>
    <property type="evidence" value="ECO:0007669"/>
    <property type="project" value="TreeGrafter"/>
</dbReference>
<dbReference type="GO" id="GO:0005524">
    <property type="term" value="F:ATP binding"/>
    <property type="evidence" value="ECO:0007669"/>
    <property type="project" value="UniProtKB-UniRule"/>
</dbReference>
<dbReference type="GO" id="GO:0000287">
    <property type="term" value="F:magnesium ion binding"/>
    <property type="evidence" value="ECO:0007669"/>
    <property type="project" value="UniProtKB-UniRule"/>
</dbReference>
<dbReference type="HAMAP" id="MF_00692">
    <property type="entry name" value="YdiU_SelO"/>
    <property type="match status" value="1"/>
</dbReference>
<dbReference type="InterPro" id="IPR003846">
    <property type="entry name" value="SelO"/>
</dbReference>
<dbReference type="NCBIfam" id="NF000658">
    <property type="entry name" value="PRK00029.1"/>
    <property type="match status" value="1"/>
</dbReference>
<dbReference type="PANTHER" id="PTHR32057">
    <property type="entry name" value="PROTEIN ADENYLYLTRANSFERASE SELO, MITOCHONDRIAL"/>
    <property type="match status" value="1"/>
</dbReference>
<dbReference type="PANTHER" id="PTHR32057:SF14">
    <property type="entry name" value="PROTEIN ADENYLYLTRANSFERASE SELO, MITOCHONDRIAL"/>
    <property type="match status" value="1"/>
</dbReference>
<dbReference type="Pfam" id="PF02696">
    <property type="entry name" value="SelO"/>
    <property type="match status" value="1"/>
</dbReference>
<gene>
    <name evidence="1" type="primary">ydiU</name>
    <name evidence="1" type="synonym">selO</name>
    <name type="ordered locus">AZOSEA38000</name>
    <name type="ORF">ebA6654</name>
</gene>
<proteinExistence type="inferred from homology"/>
<evidence type="ECO:0000255" key="1">
    <source>
        <dbReference type="HAMAP-Rule" id="MF_00692"/>
    </source>
</evidence>
<organism>
    <name type="scientific">Aromatoleum aromaticum (strain DSM 19018 / LMG 30748 / EbN1)</name>
    <name type="common">Azoarcus sp. (strain EbN1)</name>
    <dbReference type="NCBI Taxonomy" id="76114"/>
    <lineage>
        <taxon>Bacteria</taxon>
        <taxon>Pseudomonadati</taxon>
        <taxon>Pseudomonadota</taxon>
        <taxon>Betaproteobacteria</taxon>
        <taxon>Rhodocyclales</taxon>
        <taxon>Rhodocyclaceae</taxon>
        <taxon>Aromatoleum</taxon>
    </lineage>
</organism>
<accession>Q5NYD9</accession>
<name>SELO_AROAE</name>
<sequence>MKNLVLDNRFVHELPGDPNPSPDVRQVHGACYSRVMPTPVSAPHLIAWSPEVAALLGFDESDVRSPEFAAVFAGNALMPGMEPYAACYGGHQFGNWAGQLGDGRAITLGEAVTTRGDGHTGRWELQLKGAGPTPYSRHADGRAVLRSSIREFLCSEAMHHLGVPTTRALCLVGTGEKVVRDMFYDGRPKAEPGAVVCRVAPSFIRFGNFEIFTSRGDEALLTRLVDFTIARDFPELGGEPATRRAEWFCKVCERTARMIAQWMRVGFVHGVMNTDNMSILGLTIDYGPYGWIDNFDPGWTPNTTDAGGKRYRFGNQPHIAHWNLLQLANALYPVFGAAEPLHEGLDLYARVFDEENRRMLAAKLGFEAFGDEDATLVETLHALLTRAEVDMTIFFRGLASLDLEAPSIDPLRDAFYSAEKAAVAEPEMNSWLAAYTKRTKQERTPGDQRRVRMNAVNPRFVLRNYLAQEAIDAAEQGEYALVSELLDVMRHPYDEQPGRERFAARRPDWARNRAGCSMLSCSS</sequence>
<comment type="function">
    <text evidence="1">Nucleotidyltransferase involved in the post-translational modification of proteins. It can catalyze the addition of adenosine monophosphate (AMP) or uridine monophosphate (UMP) to a protein, resulting in modifications known as AMPylation and UMPylation.</text>
</comment>
<comment type="catalytic activity">
    <reaction evidence="1">
        <text>L-seryl-[protein] + ATP = 3-O-(5'-adenylyl)-L-seryl-[protein] + diphosphate</text>
        <dbReference type="Rhea" id="RHEA:58120"/>
        <dbReference type="Rhea" id="RHEA-COMP:9863"/>
        <dbReference type="Rhea" id="RHEA-COMP:15073"/>
        <dbReference type="ChEBI" id="CHEBI:29999"/>
        <dbReference type="ChEBI" id="CHEBI:30616"/>
        <dbReference type="ChEBI" id="CHEBI:33019"/>
        <dbReference type="ChEBI" id="CHEBI:142516"/>
        <dbReference type="EC" id="2.7.7.108"/>
    </reaction>
</comment>
<comment type="catalytic activity">
    <reaction evidence="1">
        <text>L-threonyl-[protein] + ATP = 3-O-(5'-adenylyl)-L-threonyl-[protein] + diphosphate</text>
        <dbReference type="Rhea" id="RHEA:54292"/>
        <dbReference type="Rhea" id="RHEA-COMP:11060"/>
        <dbReference type="Rhea" id="RHEA-COMP:13847"/>
        <dbReference type="ChEBI" id="CHEBI:30013"/>
        <dbReference type="ChEBI" id="CHEBI:30616"/>
        <dbReference type="ChEBI" id="CHEBI:33019"/>
        <dbReference type="ChEBI" id="CHEBI:138113"/>
        <dbReference type="EC" id="2.7.7.108"/>
    </reaction>
</comment>
<comment type="catalytic activity">
    <reaction evidence="1">
        <text>L-tyrosyl-[protein] + ATP = O-(5'-adenylyl)-L-tyrosyl-[protein] + diphosphate</text>
        <dbReference type="Rhea" id="RHEA:54288"/>
        <dbReference type="Rhea" id="RHEA-COMP:10136"/>
        <dbReference type="Rhea" id="RHEA-COMP:13846"/>
        <dbReference type="ChEBI" id="CHEBI:30616"/>
        <dbReference type="ChEBI" id="CHEBI:33019"/>
        <dbReference type="ChEBI" id="CHEBI:46858"/>
        <dbReference type="ChEBI" id="CHEBI:83624"/>
        <dbReference type="EC" id="2.7.7.108"/>
    </reaction>
</comment>
<comment type="catalytic activity">
    <reaction evidence="1">
        <text>L-histidyl-[protein] + UTP = N(tele)-(5'-uridylyl)-L-histidyl-[protein] + diphosphate</text>
        <dbReference type="Rhea" id="RHEA:83891"/>
        <dbReference type="Rhea" id="RHEA-COMP:9745"/>
        <dbReference type="Rhea" id="RHEA-COMP:20239"/>
        <dbReference type="ChEBI" id="CHEBI:29979"/>
        <dbReference type="ChEBI" id="CHEBI:33019"/>
        <dbReference type="ChEBI" id="CHEBI:46398"/>
        <dbReference type="ChEBI" id="CHEBI:233474"/>
    </reaction>
</comment>
<comment type="catalytic activity">
    <reaction evidence="1">
        <text>L-seryl-[protein] + UTP = O-(5'-uridylyl)-L-seryl-[protein] + diphosphate</text>
        <dbReference type="Rhea" id="RHEA:64604"/>
        <dbReference type="Rhea" id="RHEA-COMP:9863"/>
        <dbReference type="Rhea" id="RHEA-COMP:16635"/>
        <dbReference type="ChEBI" id="CHEBI:29999"/>
        <dbReference type="ChEBI" id="CHEBI:33019"/>
        <dbReference type="ChEBI" id="CHEBI:46398"/>
        <dbReference type="ChEBI" id="CHEBI:156051"/>
    </reaction>
</comment>
<comment type="catalytic activity">
    <reaction evidence="1">
        <text>L-tyrosyl-[protein] + UTP = O-(5'-uridylyl)-L-tyrosyl-[protein] + diphosphate</text>
        <dbReference type="Rhea" id="RHEA:83887"/>
        <dbReference type="Rhea" id="RHEA-COMP:10136"/>
        <dbReference type="Rhea" id="RHEA-COMP:20238"/>
        <dbReference type="ChEBI" id="CHEBI:33019"/>
        <dbReference type="ChEBI" id="CHEBI:46398"/>
        <dbReference type="ChEBI" id="CHEBI:46858"/>
        <dbReference type="ChEBI" id="CHEBI:90602"/>
    </reaction>
</comment>
<comment type="cofactor">
    <cofactor evidence="1">
        <name>Mg(2+)</name>
        <dbReference type="ChEBI" id="CHEBI:18420"/>
    </cofactor>
    <cofactor evidence="1">
        <name>Mn(2+)</name>
        <dbReference type="ChEBI" id="CHEBI:29035"/>
    </cofactor>
</comment>
<comment type="similarity">
    <text evidence="1">Belongs to the SELO family.</text>
</comment>
<keyword id="KW-0067">ATP-binding</keyword>
<keyword id="KW-0460">Magnesium</keyword>
<keyword id="KW-0464">Manganese</keyword>
<keyword id="KW-0479">Metal-binding</keyword>
<keyword id="KW-0547">Nucleotide-binding</keyword>
<keyword id="KW-0548">Nucleotidyltransferase</keyword>
<keyword id="KW-1185">Reference proteome</keyword>
<keyword id="KW-0808">Transferase</keyword>